<comment type="function">
    <text evidence="1">Mediates an active uptake of hexoses, probably by sugar/hydrogen symport.</text>
</comment>
<comment type="subcellular location">
    <subcellularLocation>
        <location>Membrane</location>
        <topology>Multi-pass membrane protein</topology>
    </subcellularLocation>
</comment>
<comment type="alternative products">
    <event type="alternative splicing"/>
    <isoform>
        <id>Q8L7R8-1</id>
        <name>1</name>
        <sequence type="displayed"/>
    </isoform>
    <isoform>
        <id>Q8L7R8-2</id>
        <name>2</name>
        <sequence type="described" ref="VSP_017028"/>
    </isoform>
</comment>
<comment type="miscellaneous">
    <molecule>Isoform 2</molecule>
    <text evidence="4">May be due to intron retention.</text>
</comment>
<comment type="similarity">
    <text evidence="4">Belongs to the major facilitator superfamily. Sugar transporter (TC 2.A.1.1) family.</text>
</comment>
<dbReference type="EMBL" id="AJ002399">
    <property type="protein sequence ID" value="CAA05384.1"/>
    <property type="molecule type" value="mRNA"/>
</dbReference>
<dbReference type="EMBL" id="AB012239">
    <property type="protein sequence ID" value="BAB08997.1"/>
    <property type="molecule type" value="Genomic_DNA"/>
</dbReference>
<dbReference type="EMBL" id="CP002688">
    <property type="protein sequence ID" value="AED97478.1"/>
    <property type="molecule type" value="Genomic_DNA"/>
</dbReference>
<dbReference type="EMBL" id="AY128303">
    <property type="protein sequence ID" value="AAM91109.1"/>
    <property type="molecule type" value="mRNA"/>
</dbReference>
<dbReference type="EMBL" id="BT000560">
    <property type="protein sequence ID" value="AAN18129.1"/>
    <property type="molecule type" value="mRNA"/>
</dbReference>
<dbReference type="RefSeq" id="NP_200960.2">
    <molecule id="Q8L7R8-1"/>
    <property type="nucleotide sequence ID" value="NM_125545.4"/>
</dbReference>
<dbReference type="SMR" id="Q8L7R8"/>
<dbReference type="BioGRID" id="21517">
    <property type="interactions" value="2"/>
</dbReference>
<dbReference type="FunCoup" id="Q8L7R8">
    <property type="interactions" value="164"/>
</dbReference>
<dbReference type="IntAct" id="Q8L7R8">
    <property type="interactions" value="2"/>
</dbReference>
<dbReference type="STRING" id="3702.Q8L7R8"/>
<dbReference type="iPTMnet" id="Q8L7R8"/>
<dbReference type="PaxDb" id="3702-AT5G61520.1"/>
<dbReference type="ProteomicsDB" id="228363">
    <molecule id="Q8L7R8-1"/>
</dbReference>
<dbReference type="EnsemblPlants" id="AT5G61520.1">
    <molecule id="Q8L7R8-1"/>
    <property type="protein sequence ID" value="AT5G61520.1"/>
    <property type="gene ID" value="AT5G61520"/>
</dbReference>
<dbReference type="GeneID" id="836273"/>
<dbReference type="Gramene" id="AT5G61520.1">
    <molecule id="Q8L7R8-1"/>
    <property type="protein sequence ID" value="AT5G61520.1"/>
    <property type="gene ID" value="AT5G61520"/>
</dbReference>
<dbReference type="KEGG" id="ath:AT5G61520"/>
<dbReference type="Araport" id="AT5G61520"/>
<dbReference type="TAIR" id="AT5G61520"/>
<dbReference type="eggNOG" id="KOG0254">
    <property type="taxonomic scope" value="Eukaryota"/>
</dbReference>
<dbReference type="HOGENOM" id="CLU_001265_30_5_1"/>
<dbReference type="InParanoid" id="Q8L7R8"/>
<dbReference type="OMA" id="INNMACP"/>
<dbReference type="OrthoDB" id="5296287at2759"/>
<dbReference type="PhylomeDB" id="Q8L7R8"/>
<dbReference type="PRO" id="PR:Q8L7R8"/>
<dbReference type="Proteomes" id="UP000006548">
    <property type="component" value="Chromosome 5"/>
</dbReference>
<dbReference type="ExpressionAtlas" id="Q8L7R8">
    <property type="expression patterns" value="baseline and differential"/>
</dbReference>
<dbReference type="GO" id="GO:0016020">
    <property type="term" value="C:membrane"/>
    <property type="evidence" value="ECO:0007669"/>
    <property type="project" value="UniProtKB-SubCell"/>
</dbReference>
<dbReference type="GO" id="GO:0015145">
    <property type="term" value="F:monosaccharide transmembrane transporter activity"/>
    <property type="evidence" value="ECO:0007669"/>
    <property type="project" value="InterPro"/>
</dbReference>
<dbReference type="GO" id="GO:0015293">
    <property type="term" value="F:symporter activity"/>
    <property type="evidence" value="ECO:0007669"/>
    <property type="project" value="UniProtKB-KW"/>
</dbReference>
<dbReference type="CDD" id="cd17361">
    <property type="entry name" value="MFS_STP"/>
    <property type="match status" value="1"/>
</dbReference>
<dbReference type="FunFam" id="1.20.1250.20:FF:000931">
    <property type="entry name" value="Sugar transport protein 3"/>
    <property type="match status" value="1"/>
</dbReference>
<dbReference type="Gene3D" id="1.20.1250.20">
    <property type="entry name" value="MFS general substrate transporter like domains"/>
    <property type="match status" value="1"/>
</dbReference>
<dbReference type="InterPro" id="IPR020846">
    <property type="entry name" value="MFS_dom"/>
</dbReference>
<dbReference type="InterPro" id="IPR044778">
    <property type="entry name" value="MFS_STP/MST-like_plant"/>
</dbReference>
<dbReference type="InterPro" id="IPR005828">
    <property type="entry name" value="MFS_sugar_transport-like"/>
</dbReference>
<dbReference type="InterPro" id="IPR036259">
    <property type="entry name" value="MFS_trans_sf"/>
</dbReference>
<dbReference type="InterPro" id="IPR045262">
    <property type="entry name" value="STP/PLT_plant"/>
</dbReference>
<dbReference type="InterPro" id="IPR003663">
    <property type="entry name" value="Sugar/inositol_transpt"/>
</dbReference>
<dbReference type="InterPro" id="IPR005829">
    <property type="entry name" value="Sugar_transporter_CS"/>
</dbReference>
<dbReference type="NCBIfam" id="TIGR00879">
    <property type="entry name" value="SP"/>
    <property type="match status" value="1"/>
</dbReference>
<dbReference type="PANTHER" id="PTHR23500">
    <property type="entry name" value="SOLUTE CARRIER FAMILY 2, FACILITATED GLUCOSE TRANSPORTER"/>
    <property type="match status" value="1"/>
</dbReference>
<dbReference type="PANTHER" id="PTHR23500:SF30">
    <property type="entry name" value="SUGAR TRANSPORT PROTEIN 3"/>
    <property type="match status" value="1"/>
</dbReference>
<dbReference type="Pfam" id="PF00083">
    <property type="entry name" value="Sugar_tr"/>
    <property type="match status" value="1"/>
</dbReference>
<dbReference type="PRINTS" id="PR00171">
    <property type="entry name" value="SUGRTRNSPORT"/>
</dbReference>
<dbReference type="SUPFAM" id="SSF103473">
    <property type="entry name" value="MFS general substrate transporter"/>
    <property type="match status" value="1"/>
</dbReference>
<dbReference type="PROSITE" id="PS50850">
    <property type="entry name" value="MFS"/>
    <property type="match status" value="1"/>
</dbReference>
<dbReference type="PROSITE" id="PS00216">
    <property type="entry name" value="SUGAR_TRANSPORT_1"/>
    <property type="match status" value="1"/>
</dbReference>
<dbReference type="PROSITE" id="PS00217">
    <property type="entry name" value="SUGAR_TRANSPORT_2"/>
    <property type="match status" value="1"/>
</dbReference>
<protein>
    <recommendedName>
        <fullName>Sugar transport protein 3</fullName>
    </recommendedName>
    <alternativeName>
        <fullName>Hexose transporter 3</fullName>
    </alternativeName>
</protein>
<gene>
    <name type="primary">STP3</name>
    <name type="ordered locus">At5g61520</name>
    <name type="ORF">K11J9_40</name>
</gene>
<accession>Q8L7R8</accession>
<accession>Q9ZS56</accession>
<organism>
    <name type="scientific">Arabidopsis thaliana</name>
    <name type="common">Mouse-ear cress</name>
    <dbReference type="NCBI Taxonomy" id="3702"/>
    <lineage>
        <taxon>Eukaryota</taxon>
        <taxon>Viridiplantae</taxon>
        <taxon>Streptophyta</taxon>
        <taxon>Embryophyta</taxon>
        <taxon>Tracheophyta</taxon>
        <taxon>Spermatophyta</taxon>
        <taxon>Magnoliopsida</taxon>
        <taxon>eudicotyledons</taxon>
        <taxon>Gunneridae</taxon>
        <taxon>Pentapetalae</taxon>
        <taxon>rosids</taxon>
        <taxon>malvids</taxon>
        <taxon>Brassicales</taxon>
        <taxon>Brassicaceae</taxon>
        <taxon>Camelineae</taxon>
        <taxon>Arabidopsis</taxon>
    </lineage>
</organism>
<sequence length="514" mass="55867">MVAEEARKEAMAKSVSGGKITYFVVASCVMAAMGGVIFGYDIGVSGGVMSMGPFLKRFFPKVYKLQEEDRRRRGNSNNHYCLFNSQLLTSFTSSLYVSGLIATLLASSVTRSWGRKPSIFLGGVSFLAGAALGGSAQNVAMLIIARLLLGVGVGFANQSVPLYLSEMAPAKYRGAISNGFQLCIGIGFLSANVINYETQNIKHGWRISLATAAIPASILTLGSLFLPETPNSIIQTTGDVHKTELMLRRVRGTNDVQDELTDLVEASSGSDTDSNAFLKLLQRKYRPELVMALVIPFFQQVTGINVVAFYAPVLYRTVGFGESGSLMSTLVTGIVGTSSTLLSMLVVDRIGRKTLFLIGGLQMLVSQVTIGVIVMVADVHDGVIKEGYGYAVVVLVCVYVAGFGWSWGPLGWLVPSEIFPLEIRSVAQSVTVAVSFVFTFAVAQSAPPMLCKFRAGIFFFYGGWLVVMTVAVQLFLPETKNVPIEKVVGLWEKHWFWRRMTSKRDIQETTILSH</sequence>
<reference key="1">
    <citation type="submission" date="1997-10" db="EMBL/GenBank/DDBJ databases">
        <title>AtSTP3, a new stress-regulated monosaccharide-H+ symporter from Arabidopsis thaliana.</title>
        <authorList>
            <person name="Baier K."/>
            <person name="Truernit E."/>
            <person name="Sauer N."/>
        </authorList>
    </citation>
    <scope>NUCLEOTIDE SEQUENCE [MRNA] (ISOFORM 1)</scope>
    <source>
        <strain>cv. Columbia</strain>
    </source>
</reference>
<reference key="2">
    <citation type="journal article" date="1998" name="DNA Res.">
        <title>Structural analysis of Arabidopsis thaliana chromosome 5. VI. Sequence features of the regions of 1,367,185 bp covered by 19 physically assigned P1 and TAC clones.</title>
        <authorList>
            <person name="Kotani H."/>
            <person name="Nakamura Y."/>
            <person name="Sato S."/>
            <person name="Asamizu E."/>
            <person name="Kaneko T."/>
            <person name="Miyajima N."/>
            <person name="Tabata S."/>
        </authorList>
    </citation>
    <scope>NUCLEOTIDE SEQUENCE [LARGE SCALE GENOMIC DNA]</scope>
    <source>
        <strain>cv. Columbia</strain>
    </source>
</reference>
<reference key="3">
    <citation type="journal article" date="2017" name="Plant J.">
        <title>Araport11: a complete reannotation of the Arabidopsis thaliana reference genome.</title>
        <authorList>
            <person name="Cheng C.Y."/>
            <person name="Krishnakumar V."/>
            <person name="Chan A.P."/>
            <person name="Thibaud-Nissen F."/>
            <person name="Schobel S."/>
            <person name="Town C.D."/>
        </authorList>
    </citation>
    <scope>GENOME REANNOTATION</scope>
    <source>
        <strain>cv. Columbia</strain>
    </source>
</reference>
<reference key="4">
    <citation type="journal article" date="2003" name="Science">
        <title>Empirical analysis of transcriptional activity in the Arabidopsis genome.</title>
        <authorList>
            <person name="Yamada K."/>
            <person name="Lim J."/>
            <person name="Dale J.M."/>
            <person name="Chen H."/>
            <person name="Shinn P."/>
            <person name="Palm C.J."/>
            <person name="Southwick A.M."/>
            <person name="Wu H.C."/>
            <person name="Kim C.J."/>
            <person name="Nguyen M."/>
            <person name="Pham P.K."/>
            <person name="Cheuk R.F."/>
            <person name="Karlin-Newmann G."/>
            <person name="Liu S.X."/>
            <person name="Lam B."/>
            <person name="Sakano H."/>
            <person name="Wu T."/>
            <person name="Yu G."/>
            <person name="Miranda M."/>
            <person name="Quach H.L."/>
            <person name="Tripp M."/>
            <person name="Chang C.H."/>
            <person name="Lee J.M."/>
            <person name="Toriumi M.J."/>
            <person name="Chan M.M."/>
            <person name="Tang C.C."/>
            <person name="Onodera C.S."/>
            <person name="Deng J.M."/>
            <person name="Akiyama K."/>
            <person name="Ansari Y."/>
            <person name="Arakawa T."/>
            <person name="Banh J."/>
            <person name="Banno F."/>
            <person name="Bowser L."/>
            <person name="Brooks S.Y."/>
            <person name="Carninci P."/>
            <person name="Chao Q."/>
            <person name="Choy N."/>
            <person name="Enju A."/>
            <person name="Goldsmith A.D."/>
            <person name="Gurjal M."/>
            <person name="Hansen N.F."/>
            <person name="Hayashizaki Y."/>
            <person name="Johnson-Hopson C."/>
            <person name="Hsuan V.W."/>
            <person name="Iida K."/>
            <person name="Karnes M."/>
            <person name="Khan S."/>
            <person name="Koesema E."/>
            <person name="Ishida J."/>
            <person name="Jiang P.X."/>
            <person name="Jones T."/>
            <person name="Kawai J."/>
            <person name="Kamiya A."/>
            <person name="Meyers C."/>
            <person name="Nakajima M."/>
            <person name="Narusaka M."/>
            <person name="Seki M."/>
            <person name="Sakurai T."/>
            <person name="Satou M."/>
            <person name="Tamse R."/>
            <person name="Vaysberg M."/>
            <person name="Wallender E.K."/>
            <person name="Wong C."/>
            <person name="Yamamura Y."/>
            <person name="Yuan S."/>
            <person name="Shinozaki K."/>
            <person name="Davis R.W."/>
            <person name="Theologis A."/>
            <person name="Ecker J.R."/>
        </authorList>
    </citation>
    <scope>NUCLEOTIDE SEQUENCE [LARGE SCALE MRNA] (ISOFORM 2)</scope>
    <source>
        <strain>cv. Columbia</strain>
    </source>
</reference>
<reference key="5">
    <citation type="journal article" date="2006" name="BMC Evol. Biol.">
        <title>The monosaccharide transporter gene family in land plants is ancient and shows differential subfamily expression and expansion across lineages.</title>
        <authorList>
            <person name="Johnson D.A."/>
            <person name="Hill J.P."/>
            <person name="Thomas M.A."/>
        </authorList>
    </citation>
    <scope>GENE FAMILY</scope>
</reference>
<evidence type="ECO:0000250" key="1"/>
<evidence type="ECO:0000255" key="2"/>
<evidence type="ECO:0000303" key="3">
    <source>
    </source>
</evidence>
<evidence type="ECO:0000305" key="4"/>
<keyword id="KW-0025">Alternative splicing</keyword>
<keyword id="KW-0472">Membrane</keyword>
<keyword id="KW-1185">Reference proteome</keyword>
<keyword id="KW-0762">Sugar transport</keyword>
<keyword id="KW-0769">Symport</keyword>
<keyword id="KW-0812">Transmembrane</keyword>
<keyword id="KW-1133">Transmembrane helix</keyword>
<keyword id="KW-0813">Transport</keyword>
<name>STP3_ARATH</name>
<proteinExistence type="evidence at transcript level"/>
<feature type="chain" id="PRO_0000050433" description="Sugar transport protein 3">
    <location>
        <begin position="1"/>
        <end position="514"/>
    </location>
</feature>
<feature type="topological domain" description="Cytoplasmic" evidence="2">
    <location>
        <begin position="1"/>
        <end position="19"/>
    </location>
</feature>
<feature type="transmembrane region" description="Helical; Name=1" evidence="2">
    <location>
        <begin position="20"/>
        <end position="40"/>
    </location>
</feature>
<feature type="transmembrane region" description="Helical; Name=2" evidence="2">
    <location>
        <begin position="87"/>
        <end position="107"/>
    </location>
</feature>
<feature type="transmembrane region" description="Helical; Name=3" evidence="2">
    <location>
        <begin position="124"/>
        <end position="144"/>
    </location>
</feature>
<feature type="transmembrane region" description="Helical; Name=4" evidence="2">
    <location>
        <begin position="147"/>
        <end position="167"/>
    </location>
</feature>
<feature type="transmembrane region" description="Helical; Name=5" evidence="2">
    <location>
        <begin position="174"/>
        <end position="194"/>
    </location>
</feature>
<feature type="transmembrane region" description="Helical; Name=6" evidence="2">
    <location>
        <begin position="207"/>
        <end position="227"/>
    </location>
</feature>
<feature type="transmembrane region" description="Helical; Name=7" evidence="2">
    <location>
        <begin position="289"/>
        <end position="309"/>
    </location>
</feature>
<feature type="transmembrane region" description="Helical; Name=8" evidence="2">
    <location>
        <begin position="327"/>
        <end position="347"/>
    </location>
</feature>
<feature type="transmembrane region" description="Helical; Name=9" evidence="2">
    <location>
        <begin position="356"/>
        <end position="376"/>
    </location>
</feature>
<feature type="transmembrane region" description="Helical; Name=10" evidence="2">
    <location>
        <begin position="392"/>
        <end position="412"/>
    </location>
</feature>
<feature type="transmembrane region" description="Helical; Name=11" evidence="2">
    <location>
        <begin position="430"/>
        <end position="450"/>
    </location>
</feature>
<feature type="transmembrane region" description="Helical; Name=12" evidence="2">
    <location>
        <begin position="456"/>
        <end position="476"/>
    </location>
</feature>
<feature type="topological domain" description="Cytoplasmic" evidence="2">
    <location>
        <begin position="477"/>
        <end position="514"/>
    </location>
</feature>
<feature type="splice variant" id="VSP_017028" description="In isoform 2." evidence="3">
    <location>
        <begin position="1"/>
        <end position="166"/>
    </location>
</feature>